<name>YL120_YEAST</name>
<gene>
    <name type="ordered locus">YLR120W-A</name>
</gene>
<evidence type="ECO:0000305" key="1"/>
<evidence type="ECO:0000305" key="2">
    <source>
    </source>
</evidence>
<dbReference type="EMBL" id="X89514">
    <property type="status" value="NOT_ANNOTATED_CDS"/>
    <property type="molecule type" value="Genomic_DNA"/>
</dbReference>
<dbReference type="EMBL" id="U53877">
    <property type="status" value="NOT_ANNOTATED_CDS"/>
    <property type="molecule type" value="Genomic_DNA"/>
</dbReference>
<dbReference type="EMBL" id="Z73293">
    <property type="status" value="NOT_ANNOTATED_CDS"/>
    <property type="molecule type" value="Genomic_DNA"/>
</dbReference>
<dbReference type="EMBL" id="AF479927">
    <property type="protein sequence ID" value="AAL79240.1"/>
    <property type="molecule type" value="Genomic_DNA"/>
</dbReference>
<dbReference type="IntAct" id="Q8TGR1">
    <property type="interactions" value="1"/>
</dbReference>
<dbReference type="STRING" id="4932.YLR120W-A"/>
<dbReference type="PaxDb" id="4932-YLR120W-A"/>
<dbReference type="EnsemblFungi" id="YLR120W-A_mRNA">
    <property type="protein sequence ID" value="YLR120W-A"/>
    <property type="gene ID" value="YLR120W-A"/>
</dbReference>
<dbReference type="AGR" id="SGD:S000028674"/>
<dbReference type="SGD" id="S000028674">
    <property type="gene designation" value="YLR120W-A"/>
</dbReference>
<dbReference type="HOGENOM" id="CLU_3385029_0_0_1"/>
<comment type="miscellaneous">
    <text evidence="1">Partially overlaps YPS1.</text>
</comment>
<comment type="caution">
    <text evidence="2">Product of a dubious gene prediction unlikely to encode a functional protein. Because of that it is not part of the S.cerevisiae S288c complete/reference proteome set.</text>
</comment>
<organism>
    <name type="scientific">Saccharomyces cerevisiae (strain ATCC 204508 / S288c)</name>
    <name type="common">Baker's yeast</name>
    <dbReference type="NCBI Taxonomy" id="559292"/>
    <lineage>
        <taxon>Eukaryota</taxon>
        <taxon>Fungi</taxon>
        <taxon>Dikarya</taxon>
        <taxon>Ascomycota</taxon>
        <taxon>Saccharomycotina</taxon>
        <taxon>Saccharomycetes</taxon>
        <taxon>Saccharomycetales</taxon>
        <taxon>Saccharomycetaceae</taxon>
        <taxon>Saccharomyces</taxon>
    </lineage>
</organism>
<proteinExistence type="uncertain"/>
<feature type="chain" id="PRO_0000299613" description="Putative uncharacterized protein YLR120W-A">
    <location>
        <begin position="1"/>
        <end position="33"/>
    </location>
</feature>
<sequence>MLFLLKSRKEGKEKVSIYSVYCFFLRKENGKDE</sequence>
<reference key="1">
    <citation type="journal article" date="1997" name="Yeast">
        <title>Sequence analysis of a 37.6 kbp cosmid clone from the right arm of Saccharomyces cerevisiae chromosome XII, carrying YAP3, HOG1, SNR6, tRNA-Arg3 and 23 new open reading frames, among which several homologies to proteins involved in cell division control and to mammalian growth factors and other animal proteins are found.</title>
        <authorList>
            <person name="Verhasselt P."/>
            <person name="Volckaert G."/>
        </authorList>
    </citation>
    <scope>NUCLEOTIDE SEQUENCE [GENOMIC DNA]</scope>
    <source>
        <strain>ATCC 90840 / EAY235 / FY23</strain>
    </source>
</reference>
<reference key="2">
    <citation type="journal article" date="1997" name="Nature">
        <title>The nucleotide sequence of Saccharomyces cerevisiae chromosome XII.</title>
        <authorList>
            <person name="Johnston M."/>
            <person name="Hillier L.W."/>
            <person name="Riles L."/>
            <person name="Albermann K."/>
            <person name="Andre B."/>
            <person name="Ansorge W."/>
            <person name="Benes V."/>
            <person name="Brueckner M."/>
            <person name="Delius H."/>
            <person name="Dubois E."/>
            <person name="Duesterhoeft A."/>
            <person name="Entian K.-D."/>
            <person name="Floeth M."/>
            <person name="Goffeau A."/>
            <person name="Hebling U."/>
            <person name="Heumann K."/>
            <person name="Heuss-Neitzel D."/>
            <person name="Hilbert H."/>
            <person name="Hilger F."/>
            <person name="Kleine K."/>
            <person name="Koetter P."/>
            <person name="Louis E.J."/>
            <person name="Messenguy F."/>
            <person name="Mewes H.-W."/>
            <person name="Miosga T."/>
            <person name="Moestl D."/>
            <person name="Mueller-Auer S."/>
            <person name="Nentwich U."/>
            <person name="Obermaier B."/>
            <person name="Piravandi E."/>
            <person name="Pohl T.M."/>
            <person name="Portetelle D."/>
            <person name="Purnelle B."/>
            <person name="Rechmann S."/>
            <person name="Rieger M."/>
            <person name="Rinke M."/>
            <person name="Rose M."/>
            <person name="Scharfe M."/>
            <person name="Scherens B."/>
            <person name="Scholler P."/>
            <person name="Schwager C."/>
            <person name="Schwarz S."/>
            <person name="Underwood A.P."/>
            <person name="Urrestarazu L.A."/>
            <person name="Vandenbol M."/>
            <person name="Verhasselt P."/>
            <person name="Vierendeels F."/>
            <person name="Voet M."/>
            <person name="Volckaert G."/>
            <person name="Voss H."/>
            <person name="Wambutt R."/>
            <person name="Wedler E."/>
            <person name="Wedler H."/>
            <person name="Zimmermann F.K."/>
            <person name="Zollner A."/>
            <person name="Hani J."/>
            <person name="Hoheisel J.D."/>
        </authorList>
    </citation>
    <scope>NUCLEOTIDE SEQUENCE [LARGE SCALE GENOMIC DNA]</scope>
    <source>
        <strain>ATCC 204508 / S288c</strain>
    </source>
</reference>
<reference key="3">
    <citation type="journal article" date="2014" name="G3 (Bethesda)">
        <title>The reference genome sequence of Saccharomyces cerevisiae: Then and now.</title>
        <authorList>
            <person name="Engel S.R."/>
            <person name="Dietrich F.S."/>
            <person name="Fisk D.G."/>
            <person name="Binkley G."/>
            <person name="Balakrishnan R."/>
            <person name="Costanzo M.C."/>
            <person name="Dwight S.S."/>
            <person name="Hitz B.C."/>
            <person name="Karra K."/>
            <person name="Nash R.S."/>
            <person name="Weng S."/>
            <person name="Wong E.D."/>
            <person name="Lloyd P."/>
            <person name="Skrzypek M.S."/>
            <person name="Miyasato S.R."/>
            <person name="Simison M."/>
            <person name="Cherry J.M."/>
        </authorList>
    </citation>
    <scope>GENOME REANNOTATION</scope>
    <source>
        <strain>ATCC 204508 / S288c</strain>
    </source>
</reference>
<reference key="4">
    <citation type="journal article" date="2002" name="Nat. Biotechnol.">
        <title>An integrated approach for finding overlooked genes in yeast.</title>
        <authorList>
            <person name="Kumar A."/>
            <person name="Harrison P.M."/>
            <person name="Cheung K.-H."/>
            <person name="Lan N."/>
            <person name="Echols N."/>
            <person name="Bertone P."/>
            <person name="Miller P."/>
            <person name="Gerstein M.B."/>
            <person name="Snyder M."/>
        </authorList>
    </citation>
    <scope>NUCLEOTIDE SEQUENCE [GENOMIC DNA]</scope>
</reference>
<accession>Q8TGR1</accession>
<protein>
    <recommendedName>
        <fullName>Putative uncharacterized protein YLR120W-A</fullName>
    </recommendedName>
</protein>